<comment type="function">
    <text evidence="1">Involved in peptide bond synthesis. Stimulates efficient translation and peptide-bond synthesis on native or reconstituted 70S ribosomes in vitro. Probably functions indirectly by altering the affinity of the ribosome for aminoacyl-tRNA, thus increasing their reactivity as acceptors for peptidyl transferase.</text>
</comment>
<comment type="pathway">
    <text evidence="1">Protein biosynthesis; polypeptide chain elongation.</text>
</comment>
<comment type="subcellular location">
    <subcellularLocation>
        <location evidence="1">Cytoplasm</location>
    </subcellularLocation>
</comment>
<comment type="similarity">
    <text evidence="1">Belongs to the elongation factor P family.</text>
</comment>
<keyword id="KW-0963">Cytoplasm</keyword>
<keyword id="KW-0251">Elongation factor</keyword>
<keyword id="KW-0648">Protein biosynthesis</keyword>
<keyword id="KW-1185">Reference proteome</keyword>
<organism>
    <name type="scientific">Corynebacterium jeikeium (strain K411)</name>
    <dbReference type="NCBI Taxonomy" id="306537"/>
    <lineage>
        <taxon>Bacteria</taxon>
        <taxon>Bacillati</taxon>
        <taxon>Actinomycetota</taxon>
        <taxon>Actinomycetes</taxon>
        <taxon>Mycobacteriales</taxon>
        <taxon>Corynebacteriaceae</taxon>
        <taxon>Corynebacterium</taxon>
    </lineage>
</organism>
<reference key="1">
    <citation type="journal article" date="2005" name="J. Bacteriol.">
        <title>Complete genome sequence and analysis of the multiresistant nosocomial pathogen Corynebacterium jeikeium K411, a lipid-requiring bacterium of the human skin flora.</title>
        <authorList>
            <person name="Tauch A."/>
            <person name="Kaiser O."/>
            <person name="Hain T."/>
            <person name="Goesmann A."/>
            <person name="Weisshaar B."/>
            <person name="Albersmeier A."/>
            <person name="Bekel T."/>
            <person name="Bischoff N."/>
            <person name="Brune I."/>
            <person name="Chakraborty T."/>
            <person name="Kalinowski J."/>
            <person name="Meyer F."/>
            <person name="Rupp O."/>
            <person name="Schneiker S."/>
            <person name="Viehoever P."/>
            <person name="Puehler A."/>
        </authorList>
    </citation>
    <scope>NUCLEOTIDE SEQUENCE [LARGE SCALE GENOMIC DNA]</scope>
    <source>
        <strain>K411</strain>
    </source>
</reference>
<accession>Q4JVG5</accession>
<dbReference type="EMBL" id="CR931997">
    <property type="protein sequence ID" value="CAI37192.1"/>
    <property type="molecule type" value="Genomic_DNA"/>
</dbReference>
<dbReference type="RefSeq" id="WP_005294892.1">
    <property type="nucleotide sequence ID" value="NC_007164.1"/>
</dbReference>
<dbReference type="SMR" id="Q4JVG5"/>
<dbReference type="STRING" id="306537.jk1028"/>
<dbReference type="GeneID" id="92738542"/>
<dbReference type="KEGG" id="cjk:jk1028"/>
<dbReference type="eggNOG" id="COG0231">
    <property type="taxonomic scope" value="Bacteria"/>
</dbReference>
<dbReference type="HOGENOM" id="CLU_074944_0_1_11"/>
<dbReference type="OrthoDB" id="9801844at2"/>
<dbReference type="UniPathway" id="UPA00345"/>
<dbReference type="Proteomes" id="UP000000545">
    <property type="component" value="Chromosome"/>
</dbReference>
<dbReference type="GO" id="GO:0005737">
    <property type="term" value="C:cytoplasm"/>
    <property type="evidence" value="ECO:0007669"/>
    <property type="project" value="UniProtKB-SubCell"/>
</dbReference>
<dbReference type="GO" id="GO:0003746">
    <property type="term" value="F:translation elongation factor activity"/>
    <property type="evidence" value="ECO:0007669"/>
    <property type="project" value="UniProtKB-UniRule"/>
</dbReference>
<dbReference type="GO" id="GO:0043043">
    <property type="term" value="P:peptide biosynthetic process"/>
    <property type="evidence" value="ECO:0007669"/>
    <property type="project" value="InterPro"/>
</dbReference>
<dbReference type="CDD" id="cd04470">
    <property type="entry name" value="S1_EF-P_repeat_1"/>
    <property type="match status" value="1"/>
</dbReference>
<dbReference type="CDD" id="cd05794">
    <property type="entry name" value="S1_EF-P_repeat_2"/>
    <property type="match status" value="1"/>
</dbReference>
<dbReference type="FunFam" id="2.30.30.30:FF:000003">
    <property type="entry name" value="Elongation factor P"/>
    <property type="match status" value="1"/>
</dbReference>
<dbReference type="FunFam" id="2.40.50.140:FF:000004">
    <property type="entry name" value="Elongation factor P"/>
    <property type="match status" value="1"/>
</dbReference>
<dbReference type="FunFam" id="2.40.50.140:FF:000009">
    <property type="entry name" value="Elongation factor P"/>
    <property type="match status" value="1"/>
</dbReference>
<dbReference type="Gene3D" id="2.30.30.30">
    <property type="match status" value="1"/>
</dbReference>
<dbReference type="Gene3D" id="2.40.50.140">
    <property type="entry name" value="Nucleic acid-binding proteins"/>
    <property type="match status" value="2"/>
</dbReference>
<dbReference type="HAMAP" id="MF_00141">
    <property type="entry name" value="EF_P"/>
    <property type="match status" value="1"/>
</dbReference>
<dbReference type="InterPro" id="IPR015365">
    <property type="entry name" value="Elong-fact-P_C"/>
</dbReference>
<dbReference type="InterPro" id="IPR012340">
    <property type="entry name" value="NA-bd_OB-fold"/>
</dbReference>
<dbReference type="InterPro" id="IPR014722">
    <property type="entry name" value="Rib_uL2_dom2"/>
</dbReference>
<dbReference type="InterPro" id="IPR020599">
    <property type="entry name" value="Transl_elong_fac_P/YeiP"/>
</dbReference>
<dbReference type="InterPro" id="IPR013185">
    <property type="entry name" value="Transl_elong_KOW-like"/>
</dbReference>
<dbReference type="InterPro" id="IPR001059">
    <property type="entry name" value="Transl_elong_P/YeiP_cen"/>
</dbReference>
<dbReference type="InterPro" id="IPR013852">
    <property type="entry name" value="Transl_elong_P/YeiP_CS"/>
</dbReference>
<dbReference type="InterPro" id="IPR011768">
    <property type="entry name" value="Transl_elongation_fac_P"/>
</dbReference>
<dbReference type="InterPro" id="IPR008991">
    <property type="entry name" value="Translation_prot_SH3-like_sf"/>
</dbReference>
<dbReference type="NCBIfam" id="TIGR00038">
    <property type="entry name" value="efp"/>
    <property type="match status" value="1"/>
</dbReference>
<dbReference type="NCBIfam" id="NF001810">
    <property type="entry name" value="PRK00529.1"/>
    <property type="match status" value="1"/>
</dbReference>
<dbReference type="PANTHER" id="PTHR30053">
    <property type="entry name" value="ELONGATION FACTOR P"/>
    <property type="match status" value="1"/>
</dbReference>
<dbReference type="PANTHER" id="PTHR30053:SF12">
    <property type="entry name" value="ELONGATION FACTOR P (EF-P) FAMILY PROTEIN"/>
    <property type="match status" value="1"/>
</dbReference>
<dbReference type="Pfam" id="PF01132">
    <property type="entry name" value="EFP"/>
    <property type="match status" value="1"/>
</dbReference>
<dbReference type="Pfam" id="PF08207">
    <property type="entry name" value="EFP_N"/>
    <property type="match status" value="1"/>
</dbReference>
<dbReference type="Pfam" id="PF09285">
    <property type="entry name" value="Elong-fact-P_C"/>
    <property type="match status" value="1"/>
</dbReference>
<dbReference type="PIRSF" id="PIRSF005901">
    <property type="entry name" value="EF-P"/>
    <property type="match status" value="1"/>
</dbReference>
<dbReference type="SMART" id="SM01185">
    <property type="entry name" value="EFP"/>
    <property type="match status" value="1"/>
</dbReference>
<dbReference type="SMART" id="SM00841">
    <property type="entry name" value="Elong-fact-P_C"/>
    <property type="match status" value="1"/>
</dbReference>
<dbReference type="SUPFAM" id="SSF50249">
    <property type="entry name" value="Nucleic acid-binding proteins"/>
    <property type="match status" value="2"/>
</dbReference>
<dbReference type="SUPFAM" id="SSF50104">
    <property type="entry name" value="Translation proteins SH3-like domain"/>
    <property type="match status" value="1"/>
</dbReference>
<dbReference type="PROSITE" id="PS01275">
    <property type="entry name" value="EFP"/>
    <property type="match status" value="1"/>
</dbReference>
<proteinExistence type="inferred from homology"/>
<sequence length="187" mass="20526">MATTADFKNGLVLKVDGKLQQIVEFQHVKPGKGPAFVRTKLKDVVSGKTIDKTWNAGVKVETATVDRRDMTYLYNDGTSFVLMDEKTYDQIELAPHLMGDGAKFLLENTSVQVSFHEGEPLFAELPVSVELKIEHTDPGLQGDRSTGGSKPATLETGAEIQVPLFLETGNVVKVDTRTGEYLSRVNN</sequence>
<name>EFP_CORJK</name>
<gene>
    <name evidence="1" type="primary">efp</name>
    <name type="ordered locus">jk1028</name>
</gene>
<evidence type="ECO:0000255" key="1">
    <source>
        <dbReference type="HAMAP-Rule" id="MF_00141"/>
    </source>
</evidence>
<feature type="chain" id="PRO_1000010727" description="Elongation factor P">
    <location>
        <begin position="1"/>
        <end position="187"/>
    </location>
</feature>
<protein>
    <recommendedName>
        <fullName evidence="1">Elongation factor P</fullName>
        <shortName evidence="1">EF-P</shortName>
    </recommendedName>
</protein>